<dbReference type="EMBL" id="AE013599">
    <property type="protein sequence ID" value="AAF59064.1"/>
    <property type="molecule type" value="Genomic_DNA"/>
</dbReference>
<dbReference type="EMBL" id="AY061354">
    <property type="protein sequence ID" value="AAL28902.1"/>
    <property type="molecule type" value="mRNA"/>
</dbReference>
<dbReference type="RefSeq" id="NP_610400.1">
    <property type="nucleotide sequence ID" value="NM_136556.3"/>
</dbReference>
<dbReference type="SMR" id="Q9V4W1"/>
<dbReference type="ComplexPortal" id="CPX-2568">
    <property type="entry name" value="Nuclear pore complex"/>
</dbReference>
<dbReference type="FunCoup" id="Q9V4W1">
    <property type="interactions" value="547"/>
</dbReference>
<dbReference type="IntAct" id="Q9V4W1">
    <property type="interactions" value="4"/>
</dbReference>
<dbReference type="STRING" id="7227.FBpp0087775"/>
<dbReference type="PaxDb" id="7227-FBpp0087775"/>
<dbReference type="DNASU" id="35849"/>
<dbReference type="EnsemblMetazoa" id="FBtr0088695">
    <property type="protein sequence ID" value="FBpp0087775"/>
    <property type="gene ID" value="FBgn0033316"/>
</dbReference>
<dbReference type="GeneID" id="35849"/>
<dbReference type="KEGG" id="dme:Dmel_CG14749"/>
<dbReference type="UCSC" id="CG14749-RA">
    <property type="organism name" value="d. melanogaster"/>
</dbReference>
<dbReference type="AGR" id="FB:FBgn0033316"/>
<dbReference type="CTD" id="2733"/>
<dbReference type="FlyBase" id="FBgn0033316">
    <property type="gene designation" value="Gle1"/>
</dbReference>
<dbReference type="VEuPathDB" id="VectorBase:FBgn0033316"/>
<dbReference type="eggNOG" id="KOG2412">
    <property type="taxonomic scope" value="Eukaryota"/>
</dbReference>
<dbReference type="GeneTree" id="ENSGT00390000012903"/>
<dbReference type="HOGENOM" id="CLU_024662_2_0_1"/>
<dbReference type="InParanoid" id="Q9V4W1"/>
<dbReference type="OMA" id="AYMYKES"/>
<dbReference type="OrthoDB" id="420884at2759"/>
<dbReference type="PhylomeDB" id="Q9V4W1"/>
<dbReference type="Reactome" id="R-DME-159236">
    <property type="pathway name" value="Transport of Mature mRNA derived from an Intron-Containing Transcript"/>
</dbReference>
<dbReference type="SignaLink" id="Q9V4W1"/>
<dbReference type="BioGRID-ORCS" id="35849">
    <property type="hits" value="0 hits in 1 CRISPR screen"/>
</dbReference>
<dbReference type="GenomeRNAi" id="35849"/>
<dbReference type="PRO" id="PR:Q9V4W1"/>
<dbReference type="Proteomes" id="UP000000803">
    <property type="component" value="Chromosome 2R"/>
</dbReference>
<dbReference type="Bgee" id="FBgn0033316">
    <property type="expression patterns" value="Expressed in secondary oocyte and 85 other cell types or tissues"/>
</dbReference>
<dbReference type="GO" id="GO:0005737">
    <property type="term" value="C:cytoplasm"/>
    <property type="evidence" value="ECO:0000318"/>
    <property type="project" value="GO_Central"/>
</dbReference>
<dbReference type="GO" id="GO:0005643">
    <property type="term" value="C:nuclear pore"/>
    <property type="evidence" value="ECO:0000250"/>
    <property type="project" value="UniProtKB"/>
</dbReference>
<dbReference type="GO" id="GO:0044614">
    <property type="term" value="C:nuclear pore cytoplasmic filaments"/>
    <property type="evidence" value="ECO:0000318"/>
    <property type="project" value="GO_Central"/>
</dbReference>
<dbReference type="GO" id="GO:0000822">
    <property type="term" value="F:inositol hexakisphosphate binding"/>
    <property type="evidence" value="ECO:0000318"/>
    <property type="project" value="GO_Central"/>
</dbReference>
<dbReference type="GO" id="GO:0005543">
    <property type="term" value="F:phospholipid binding"/>
    <property type="evidence" value="ECO:0000318"/>
    <property type="project" value="GO_Central"/>
</dbReference>
<dbReference type="GO" id="GO:0031369">
    <property type="term" value="F:translation initiation factor binding"/>
    <property type="evidence" value="ECO:0000318"/>
    <property type="project" value="GO_Central"/>
</dbReference>
<dbReference type="GO" id="GO:0016973">
    <property type="term" value="P:poly(A)+ mRNA export from nucleus"/>
    <property type="evidence" value="ECO:0000250"/>
    <property type="project" value="UniProtKB"/>
</dbReference>
<dbReference type="GO" id="GO:0015031">
    <property type="term" value="P:protein transport"/>
    <property type="evidence" value="ECO:0007669"/>
    <property type="project" value="UniProtKB-KW"/>
</dbReference>
<dbReference type="FunFam" id="1.25.40.510:FF:000001">
    <property type="entry name" value="Nucleoporin GLE1 isoform 1"/>
    <property type="match status" value="1"/>
</dbReference>
<dbReference type="Gene3D" id="1.25.40.510">
    <property type="entry name" value="GLE1-like"/>
    <property type="match status" value="1"/>
</dbReference>
<dbReference type="InterPro" id="IPR012476">
    <property type="entry name" value="GLE1"/>
</dbReference>
<dbReference type="InterPro" id="IPR038506">
    <property type="entry name" value="GLE1-like_sf"/>
</dbReference>
<dbReference type="PANTHER" id="PTHR12960">
    <property type="entry name" value="GLE-1-RELATED"/>
    <property type="match status" value="1"/>
</dbReference>
<dbReference type="PANTHER" id="PTHR12960:SF0">
    <property type="entry name" value="MRNA EXPORT FACTOR GLE1"/>
    <property type="match status" value="1"/>
</dbReference>
<dbReference type="Pfam" id="PF07817">
    <property type="entry name" value="GLE1"/>
    <property type="match status" value="1"/>
</dbReference>
<reference key="1">
    <citation type="journal article" date="2000" name="Science">
        <title>The genome sequence of Drosophila melanogaster.</title>
        <authorList>
            <person name="Adams M.D."/>
            <person name="Celniker S.E."/>
            <person name="Holt R.A."/>
            <person name="Evans C.A."/>
            <person name="Gocayne J.D."/>
            <person name="Amanatides P.G."/>
            <person name="Scherer S.E."/>
            <person name="Li P.W."/>
            <person name="Hoskins R.A."/>
            <person name="Galle R.F."/>
            <person name="George R.A."/>
            <person name="Lewis S.E."/>
            <person name="Richards S."/>
            <person name="Ashburner M."/>
            <person name="Henderson S.N."/>
            <person name="Sutton G.G."/>
            <person name="Wortman J.R."/>
            <person name="Yandell M.D."/>
            <person name="Zhang Q."/>
            <person name="Chen L.X."/>
            <person name="Brandon R.C."/>
            <person name="Rogers Y.-H.C."/>
            <person name="Blazej R.G."/>
            <person name="Champe M."/>
            <person name="Pfeiffer B.D."/>
            <person name="Wan K.H."/>
            <person name="Doyle C."/>
            <person name="Baxter E.G."/>
            <person name="Helt G."/>
            <person name="Nelson C.R."/>
            <person name="Miklos G.L.G."/>
            <person name="Abril J.F."/>
            <person name="Agbayani A."/>
            <person name="An H.-J."/>
            <person name="Andrews-Pfannkoch C."/>
            <person name="Baldwin D."/>
            <person name="Ballew R.M."/>
            <person name="Basu A."/>
            <person name="Baxendale J."/>
            <person name="Bayraktaroglu L."/>
            <person name="Beasley E.M."/>
            <person name="Beeson K.Y."/>
            <person name="Benos P.V."/>
            <person name="Berman B.P."/>
            <person name="Bhandari D."/>
            <person name="Bolshakov S."/>
            <person name="Borkova D."/>
            <person name="Botchan M.R."/>
            <person name="Bouck J."/>
            <person name="Brokstein P."/>
            <person name="Brottier P."/>
            <person name="Burtis K.C."/>
            <person name="Busam D.A."/>
            <person name="Butler H."/>
            <person name="Cadieu E."/>
            <person name="Center A."/>
            <person name="Chandra I."/>
            <person name="Cherry J.M."/>
            <person name="Cawley S."/>
            <person name="Dahlke C."/>
            <person name="Davenport L.B."/>
            <person name="Davies P."/>
            <person name="de Pablos B."/>
            <person name="Delcher A."/>
            <person name="Deng Z."/>
            <person name="Mays A.D."/>
            <person name="Dew I."/>
            <person name="Dietz S.M."/>
            <person name="Dodson K."/>
            <person name="Doup L.E."/>
            <person name="Downes M."/>
            <person name="Dugan-Rocha S."/>
            <person name="Dunkov B.C."/>
            <person name="Dunn P."/>
            <person name="Durbin K.J."/>
            <person name="Evangelista C.C."/>
            <person name="Ferraz C."/>
            <person name="Ferriera S."/>
            <person name="Fleischmann W."/>
            <person name="Fosler C."/>
            <person name="Gabrielian A.E."/>
            <person name="Garg N.S."/>
            <person name="Gelbart W.M."/>
            <person name="Glasser K."/>
            <person name="Glodek A."/>
            <person name="Gong F."/>
            <person name="Gorrell J.H."/>
            <person name="Gu Z."/>
            <person name="Guan P."/>
            <person name="Harris M."/>
            <person name="Harris N.L."/>
            <person name="Harvey D.A."/>
            <person name="Heiman T.J."/>
            <person name="Hernandez J.R."/>
            <person name="Houck J."/>
            <person name="Hostin D."/>
            <person name="Houston K.A."/>
            <person name="Howland T.J."/>
            <person name="Wei M.-H."/>
            <person name="Ibegwam C."/>
            <person name="Jalali M."/>
            <person name="Kalush F."/>
            <person name="Karpen G.H."/>
            <person name="Ke Z."/>
            <person name="Kennison J.A."/>
            <person name="Ketchum K.A."/>
            <person name="Kimmel B.E."/>
            <person name="Kodira C.D."/>
            <person name="Kraft C.L."/>
            <person name="Kravitz S."/>
            <person name="Kulp D."/>
            <person name="Lai Z."/>
            <person name="Lasko P."/>
            <person name="Lei Y."/>
            <person name="Levitsky A.A."/>
            <person name="Li J.H."/>
            <person name="Li Z."/>
            <person name="Liang Y."/>
            <person name="Lin X."/>
            <person name="Liu X."/>
            <person name="Mattei B."/>
            <person name="McIntosh T.C."/>
            <person name="McLeod M.P."/>
            <person name="McPherson D."/>
            <person name="Merkulov G."/>
            <person name="Milshina N.V."/>
            <person name="Mobarry C."/>
            <person name="Morris J."/>
            <person name="Moshrefi A."/>
            <person name="Mount S.M."/>
            <person name="Moy M."/>
            <person name="Murphy B."/>
            <person name="Murphy L."/>
            <person name="Muzny D.M."/>
            <person name="Nelson D.L."/>
            <person name="Nelson D.R."/>
            <person name="Nelson K.A."/>
            <person name="Nixon K."/>
            <person name="Nusskern D.R."/>
            <person name="Pacleb J.M."/>
            <person name="Palazzolo M."/>
            <person name="Pittman G.S."/>
            <person name="Pan S."/>
            <person name="Pollard J."/>
            <person name="Puri V."/>
            <person name="Reese M.G."/>
            <person name="Reinert K."/>
            <person name="Remington K."/>
            <person name="Saunders R.D.C."/>
            <person name="Scheeler F."/>
            <person name="Shen H."/>
            <person name="Shue B.C."/>
            <person name="Siden-Kiamos I."/>
            <person name="Simpson M."/>
            <person name="Skupski M.P."/>
            <person name="Smith T.J."/>
            <person name="Spier E."/>
            <person name="Spradling A.C."/>
            <person name="Stapleton M."/>
            <person name="Strong R."/>
            <person name="Sun E."/>
            <person name="Svirskas R."/>
            <person name="Tector C."/>
            <person name="Turner R."/>
            <person name="Venter E."/>
            <person name="Wang A.H."/>
            <person name="Wang X."/>
            <person name="Wang Z.-Y."/>
            <person name="Wassarman D.A."/>
            <person name="Weinstock G.M."/>
            <person name="Weissenbach J."/>
            <person name="Williams S.M."/>
            <person name="Woodage T."/>
            <person name="Worley K.C."/>
            <person name="Wu D."/>
            <person name="Yang S."/>
            <person name="Yao Q.A."/>
            <person name="Ye J."/>
            <person name="Yeh R.-F."/>
            <person name="Zaveri J.S."/>
            <person name="Zhan M."/>
            <person name="Zhang G."/>
            <person name="Zhao Q."/>
            <person name="Zheng L."/>
            <person name="Zheng X.H."/>
            <person name="Zhong F.N."/>
            <person name="Zhong W."/>
            <person name="Zhou X."/>
            <person name="Zhu S.C."/>
            <person name="Zhu X."/>
            <person name="Smith H.O."/>
            <person name="Gibbs R.A."/>
            <person name="Myers E.W."/>
            <person name="Rubin G.M."/>
            <person name="Venter J.C."/>
        </authorList>
    </citation>
    <scope>NUCLEOTIDE SEQUENCE [LARGE SCALE GENOMIC DNA]</scope>
    <source>
        <strain>Berkeley</strain>
    </source>
</reference>
<reference key="2">
    <citation type="journal article" date="2002" name="Genome Biol.">
        <title>Annotation of the Drosophila melanogaster euchromatic genome: a systematic review.</title>
        <authorList>
            <person name="Misra S."/>
            <person name="Crosby M.A."/>
            <person name="Mungall C.J."/>
            <person name="Matthews B.B."/>
            <person name="Campbell K.S."/>
            <person name="Hradecky P."/>
            <person name="Huang Y."/>
            <person name="Kaminker J.S."/>
            <person name="Millburn G.H."/>
            <person name="Prochnik S.E."/>
            <person name="Smith C.D."/>
            <person name="Tupy J.L."/>
            <person name="Whitfield E.J."/>
            <person name="Bayraktaroglu L."/>
            <person name="Berman B.P."/>
            <person name="Bettencourt B.R."/>
            <person name="Celniker S.E."/>
            <person name="de Grey A.D.N.J."/>
            <person name="Drysdale R.A."/>
            <person name="Harris N.L."/>
            <person name="Richter J."/>
            <person name="Russo S."/>
            <person name="Schroeder A.J."/>
            <person name="Shu S.Q."/>
            <person name="Stapleton M."/>
            <person name="Yamada C."/>
            <person name="Ashburner M."/>
            <person name="Gelbart W.M."/>
            <person name="Rubin G.M."/>
            <person name="Lewis S.E."/>
        </authorList>
    </citation>
    <scope>GENOME REANNOTATION</scope>
    <source>
        <strain>Berkeley</strain>
    </source>
</reference>
<reference key="3">
    <citation type="journal article" date="2002" name="Genome Biol.">
        <title>A Drosophila full-length cDNA resource.</title>
        <authorList>
            <person name="Stapleton M."/>
            <person name="Carlson J.W."/>
            <person name="Brokstein P."/>
            <person name="Yu C."/>
            <person name="Champe M."/>
            <person name="George R.A."/>
            <person name="Guarin H."/>
            <person name="Kronmiller B."/>
            <person name="Pacleb J.M."/>
            <person name="Park S."/>
            <person name="Wan K.H."/>
            <person name="Rubin G.M."/>
            <person name="Celniker S.E."/>
        </authorList>
    </citation>
    <scope>NUCLEOTIDE SEQUENCE [LARGE SCALE MRNA]</scope>
    <source>
        <strain>Berkeley</strain>
        <tissue>Embryo</tissue>
    </source>
</reference>
<organism>
    <name type="scientific">Drosophila melanogaster</name>
    <name type="common">Fruit fly</name>
    <dbReference type="NCBI Taxonomy" id="7227"/>
    <lineage>
        <taxon>Eukaryota</taxon>
        <taxon>Metazoa</taxon>
        <taxon>Ecdysozoa</taxon>
        <taxon>Arthropoda</taxon>
        <taxon>Hexapoda</taxon>
        <taxon>Insecta</taxon>
        <taxon>Pterygota</taxon>
        <taxon>Neoptera</taxon>
        <taxon>Endopterygota</taxon>
        <taxon>Diptera</taxon>
        <taxon>Brachycera</taxon>
        <taxon>Muscomorpha</taxon>
        <taxon>Ephydroidea</taxon>
        <taxon>Drosophilidae</taxon>
        <taxon>Drosophila</taxon>
        <taxon>Sophophora</taxon>
    </lineage>
</organism>
<accession>Q9V4W1</accession>
<comment type="function">
    <text evidence="1">Required for the export of mRNAs containing poly(A) tails from the nucleus into the cytoplasm. May be involved in the terminal step of the mRNA transport through the nuclear pore complex (NPC) (By similarity).</text>
</comment>
<comment type="subunit">
    <text evidence="1">May associate with the NPC.</text>
</comment>
<comment type="subcellular location">
    <subcellularLocation>
        <location evidence="1">Cytoplasm</location>
    </subcellularLocation>
    <subcellularLocation>
        <location evidence="1">Nucleus</location>
        <location evidence="1">Nuclear pore complex</location>
    </subcellularLocation>
</comment>
<comment type="similarity">
    <text evidence="4">Belongs to the GLE1 family.</text>
</comment>
<name>GLE1_DROME</name>
<gene>
    <name evidence="5" type="primary">Gle1</name>
    <name evidence="5" type="ORF">CG14749</name>
</gene>
<keyword id="KW-0175">Coiled coil</keyword>
<keyword id="KW-0963">Cytoplasm</keyword>
<keyword id="KW-0509">mRNA transport</keyword>
<keyword id="KW-0906">Nuclear pore complex</keyword>
<keyword id="KW-0539">Nucleus</keyword>
<keyword id="KW-0653">Protein transport</keyword>
<keyword id="KW-1185">Reference proteome</keyword>
<keyword id="KW-0811">Translocation</keyword>
<keyword id="KW-0813">Transport</keyword>
<sequence>MDDMMRAMDCLNMAATLRNAALASATCTGRTLGEDREPIWVEGSRKTPEPPLPEESPAPEPNNEIPLLPKIDFEPNISCFPDLQAINASIVRRELEEEGKRCVRQQLKAIRDKQDAMRLSRETQQRKEERQRDQLQQKALRERNESLLIQKADQMTAAQLEAQQREQLALRQQIDQKLHKLALEGVSRCQRRFNQKYEGIAKILLSLNPETVKVCAAQNTQLKELGQKFEQLVSSVKMGNCEMQSQFLCSIIKAEEFCKSLDALELDIIKQLAEFSEQIQQQLKMEAAKKLEDERQRQQQQEEERQKLEEQQKLEEQEKLRKEKEESAAKEKQQEAETAKADAANVPAPLEPKSQDVPPAATATSTSVHPDRLKFYNDILALYQSKVDAVKPLQTEESLKQYRTGCQRAINLPLNAISAVSPQHLAQNFDKLYSFFAGQPTKVMNGTITINDHPLARDYCMLLMAKKFVSQTETAICSNPQAAFPFASVIITFWKLLPDFGKVFLAYMYKESPFLVPYVIPQQQGQTPEQYLKTIGYRLTDKNELEKPDIYLKRQTGLARLYAAVIISQGRKAAGPDECFELNEGWLWLAHMVHVKPLPDISATLIMEILQTLGFELWRTYGKQFVKLLVYIQNIYMPQLAAYDEGGPKTRLEMLLAKFLRERQIAQAVGVLPPGFW</sequence>
<evidence type="ECO:0000250" key="1"/>
<evidence type="ECO:0000255" key="2"/>
<evidence type="ECO:0000256" key="3">
    <source>
        <dbReference type="SAM" id="MobiDB-lite"/>
    </source>
</evidence>
<evidence type="ECO:0000305" key="4"/>
<evidence type="ECO:0000312" key="5">
    <source>
        <dbReference type="FlyBase" id="FBgn0033316"/>
    </source>
</evidence>
<feature type="chain" id="PRO_0000204827" description="mRNA export factor Gle1">
    <location>
        <begin position="1"/>
        <end position="677"/>
    </location>
</feature>
<feature type="region of interest" description="Disordered" evidence="3">
    <location>
        <begin position="34"/>
        <end position="65"/>
    </location>
</feature>
<feature type="region of interest" description="Disordered" evidence="3">
    <location>
        <begin position="113"/>
        <end position="136"/>
    </location>
</feature>
<feature type="region of interest" description="Disordered" evidence="3">
    <location>
        <begin position="294"/>
        <end position="366"/>
    </location>
</feature>
<feature type="coiled-coil region" evidence="2">
    <location>
        <begin position="122"/>
        <end position="179"/>
    </location>
</feature>
<feature type="coiled-coil region" evidence="2">
    <location>
        <begin position="280"/>
        <end position="346"/>
    </location>
</feature>
<feature type="compositionally biased region" description="Basic and acidic residues" evidence="3">
    <location>
        <begin position="34"/>
        <end position="48"/>
    </location>
</feature>
<feature type="compositionally biased region" description="Pro residues" evidence="3">
    <location>
        <begin position="49"/>
        <end position="60"/>
    </location>
</feature>
<feature type="compositionally biased region" description="Basic and acidic residues" evidence="3">
    <location>
        <begin position="294"/>
        <end position="340"/>
    </location>
</feature>
<proteinExistence type="evidence at transcript level"/>
<protein>
    <recommendedName>
        <fullName evidence="4">mRNA export factor Gle1</fullName>
    </recommendedName>
    <alternativeName>
        <fullName evidence="5">Gle1 RNA export mediator</fullName>
    </alternativeName>
    <alternativeName>
        <fullName evidence="4">Nucleoporin Gle1</fullName>
    </alternativeName>
</protein>